<sequence>MSFRLRIDDSVTADHVVCWGVTVALLKKSLFGSTPEERKRRVEEKISQAVVELGLEGLSDEFRVSMLSAWVRYYVFRVDAGEKTFVLNVLSPNSPVKSFRDILDPLRGLFEKFRENIAVPVAYTDEFMLQEWINGLPLSELRDGDVMRSDEKSRRIIEESIYLTARLLYRLWKEGFVYSPWEDYEAMYCDGKIVLLDVTRFEKKPSNESFLQHYYGAPFCPPDVLKDPKSPVNRLYFRGTSERDYFGVEREKYEELFLKGIRDECGSEQEFKILLGDCEAVERIKRV</sequence>
<organism>
    <name type="scientific">Archaeoglobus fulgidus (strain ATCC 49558 / DSM 4304 / JCM 9628 / NBRC 100126 / VC-16)</name>
    <dbReference type="NCBI Taxonomy" id="224325"/>
    <lineage>
        <taxon>Archaea</taxon>
        <taxon>Methanobacteriati</taxon>
        <taxon>Methanobacteriota</taxon>
        <taxon>Archaeoglobi</taxon>
        <taxon>Archaeoglobales</taxon>
        <taxon>Archaeoglobaceae</taxon>
        <taxon>Archaeoglobus</taxon>
    </lineage>
</organism>
<keyword id="KW-1185">Reference proteome</keyword>
<reference key="1">
    <citation type="journal article" date="1997" name="Nature">
        <title>The complete genome sequence of the hyperthermophilic, sulphate-reducing archaeon Archaeoglobus fulgidus.</title>
        <authorList>
            <person name="Klenk H.-P."/>
            <person name="Clayton R.A."/>
            <person name="Tomb J.-F."/>
            <person name="White O."/>
            <person name="Nelson K.E."/>
            <person name="Ketchum K.A."/>
            <person name="Dodson R.J."/>
            <person name="Gwinn M.L."/>
            <person name="Hickey E.K."/>
            <person name="Peterson J.D."/>
            <person name="Richardson D.L."/>
            <person name="Kerlavage A.R."/>
            <person name="Graham D.E."/>
            <person name="Kyrpides N.C."/>
            <person name="Fleischmann R.D."/>
            <person name="Quackenbush J."/>
            <person name="Lee N.H."/>
            <person name="Sutton G.G."/>
            <person name="Gill S.R."/>
            <person name="Kirkness E.F."/>
            <person name="Dougherty B.A."/>
            <person name="McKenney K."/>
            <person name="Adams M.D."/>
            <person name="Loftus B.J."/>
            <person name="Peterson S.N."/>
            <person name="Reich C.I."/>
            <person name="McNeil L.K."/>
            <person name="Badger J.H."/>
            <person name="Glodek A."/>
            <person name="Zhou L."/>
            <person name="Overbeek R."/>
            <person name="Gocayne J.D."/>
            <person name="Weidman J.F."/>
            <person name="McDonald L.A."/>
            <person name="Utterback T.R."/>
            <person name="Cotton M.D."/>
            <person name="Spriggs T."/>
            <person name="Artiach P."/>
            <person name="Kaine B.P."/>
            <person name="Sykes S.M."/>
            <person name="Sadow P.W."/>
            <person name="D'Andrea K.P."/>
            <person name="Bowman C."/>
            <person name="Fujii C."/>
            <person name="Garland S.A."/>
            <person name="Mason T.M."/>
            <person name="Olsen G.J."/>
            <person name="Fraser C.M."/>
            <person name="Smith H.O."/>
            <person name="Woese C.R."/>
            <person name="Venter J.C."/>
        </authorList>
    </citation>
    <scope>NUCLEOTIDE SEQUENCE [LARGE SCALE GENOMIC DNA]</scope>
    <source>
        <strain>ATCC 49558 / DSM 4304 / JCM 9628 / NBRC 100126 / VC-16</strain>
    </source>
</reference>
<dbReference type="EMBL" id="AE000782">
    <property type="protein sequence ID" value="AAB88967.1"/>
    <property type="molecule type" value="Genomic_DNA"/>
</dbReference>
<dbReference type="PIR" id="D69536">
    <property type="entry name" value="D69536"/>
</dbReference>
<dbReference type="STRING" id="224325.AF_2292"/>
<dbReference type="PaxDb" id="224325-AF_2292"/>
<dbReference type="EnsemblBacteria" id="AAB88967">
    <property type="protein sequence ID" value="AAB88967"/>
    <property type="gene ID" value="AF_2292"/>
</dbReference>
<dbReference type="KEGG" id="afu:AF_2292"/>
<dbReference type="HOGENOM" id="CLU_968376_0_0_2"/>
<dbReference type="OrthoDB" id="387477at2157"/>
<dbReference type="Proteomes" id="UP000002199">
    <property type="component" value="Chromosome"/>
</dbReference>
<accession>O27992</accession>
<gene>
    <name type="ordered locus">AF_2292</name>
</gene>
<protein>
    <recommendedName>
        <fullName>Uncharacterized protein AF_2292</fullName>
    </recommendedName>
</protein>
<name>Y2292_ARCFU</name>
<feature type="chain" id="PRO_0000128133" description="Uncharacterized protein AF_2292">
    <location>
        <begin position="1"/>
        <end position="287"/>
    </location>
</feature>
<proteinExistence type="predicted"/>